<proteinExistence type="evidence at transcript level"/>
<reference key="1">
    <citation type="journal article" date="2002" name="Genes Genet. Syst.">
        <title>Changes in body temperature pattern in vertebrates do not influence the codon usages of alpha-globin genes.</title>
        <authorList>
            <person name="Hamada K."/>
            <person name="Horiike T."/>
            <person name="Kanaya S."/>
            <person name="Nakamura H."/>
            <person name="Ota H."/>
            <person name="Yatogo T."/>
            <person name="Okada K."/>
            <person name="Nakamura H."/>
            <person name="Shinozawa T."/>
        </authorList>
    </citation>
    <scope>NUCLEOTIDE SEQUENCE [MRNA]</scope>
    <source>
        <tissue>Blood</tissue>
    </source>
</reference>
<name>HBA_PIPAB</name>
<comment type="function">
    <text>Involved in oxygen transport from the lung to the various peripheral tissues.</text>
</comment>
<comment type="function">
    <molecule>Hemopressin</molecule>
    <text evidence="2">Hemopressin acts as an antagonist peptide of the cannabinoid receptor CNR1. Hemopressin-binding efficiently blocks cannabinoid receptor CNR1 and subsequent signaling.</text>
</comment>
<comment type="subunit">
    <text>Heterotetramer of two alpha chains and two beta chains.</text>
</comment>
<comment type="tissue specificity">
    <text>Red blood cells.</text>
</comment>
<comment type="similarity">
    <text evidence="4">Belongs to the globin family.</text>
</comment>
<feature type="chain" id="PRO_0000052732" description="Hemoglobin subunit alpha">
    <location>
        <begin position="1"/>
        <end position="143"/>
    </location>
</feature>
<feature type="peptide" id="PRO_0000455927" description="Hemopressin" evidence="2">
    <location>
        <begin position="97"/>
        <end position="105"/>
    </location>
</feature>
<feature type="domain" description="Globin" evidence="4">
    <location>
        <begin position="2"/>
        <end position="143"/>
    </location>
</feature>
<feature type="binding site" evidence="4">
    <location>
        <position position="60"/>
    </location>
    <ligand>
        <name>O2</name>
        <dbReference type="ChEBI" id="CHEBI:15379"/>
    </ligand>
</feature>
<feature type="binding site" description="proximal binding residue" evidence="4">
    <location>
        <position position="89"/>
    </location>
    <ligand>
        <name>heme b</name>
        <dbReference type="ChEBI" id="CHEBI:60344"/>
    </ligand>
    <ligandPart>
        <name>Fe</name>
        <dbReference type="ChEBI" id="CHEBI:18248"/>
    </ligandPart>
</feature>
<feature type="modified residue" description="Phosphoserine" evidence="3">
    <location>
        <position position="4"/>
    </location>
</feature>
<feature type="modified residue" description="N6-succinyllysine" evidence="1">
    <location>
        <position position="8"/>
    </location>
</feature>
<feature type="modified residue" description="Phosphothreonine" evidence="3">
    <location>
        <position position="9"/>
    </location>
</feature>
<feature type="modified residue" description="N6-succinyllysine" evidence="1">
    <location>
        <position position="12"/>
    </location>
</feature>
<feature type="modified residue" description="N6-acetyllysine; alternate" evidence="3">
    <location>
        <position position="17"/>
    </location>
</feature>
<feature type="modified residue" description="N6-succinyllysine; alternate" evidence="1">
    <location>
        <position position="17"/>
    </location>
</feature>
<feature type="modified residue" description="Phosphotyrosine" evidence="3">
    <location>
        <position position="25"/>
    </location>
</feature>
<feature type="modified residue" description="Phosphoserine" evidence="3">
    <location>
        <position position="36"/>
    </location>
</feature>
<feature type="modified residue" description="N6-succinyllysine" evidence="1">
    <location>
        <position position="41"/>
    </location>
</feature>
<feature type="modified residue" description="Phosphoserine" evidence="3">
    <location>
        <position position="51"/>
    </location>
</feature>
<feature type="modified residue" description="Phosphoserine" evidence="1">
    <location>
        <position position="104"/>
    </location>
</feature>
<feature type="modified residue" description="Phosphothreonine" evidence="1">
    <location>
        <position position="110"/>
    </location>
</feature>
<feature type="modified residue" description="Phosphoserine" evidence="1">
    <location>
        <position position="126"/>
    </location>
</feature>
<feature type="modified residue" description="Phosphothreonine" evidence="1">
    <location>
        <position position="136"/>
    </location>
</feature>
<feature type="modified residue" description="Phosphoserine" evidence="1">
    <location>
        <position position="140"/>
    </location>
</feature>
<organism>
    <name type="scientific">Pipistrellus abramus</name>
    <name type="common">Japanese pipistrelle</name>
    <name type="synonym">Pipistrellus javanicus abramus</name>
    <dbReference type="NCBI Taxonomy" id="105295"/>
    <lineage>
        <taxon>Eukaryota</taxon>
        <taxon>Metazoa</taxon>
        <taxon>Chordata</taxon>
        <taxon>Craniata</taxon>
        <taxon>Vertebrata</taxon>
        <taxon>Euteleostomi</taxon>
        <taxon>Mammalia</taxon>
        <taxon>Eutheria</taxon>
        <taxon>Laurasiatheria</taxon>
        <taxon>Chiroptera</taxon>
        <taxon>Yangochiroptera</taxon>
        <taxon>Vespertilionidae</taxon>
        <taxon>Pipistrellus</taxon>
    </lineage>
</organism>
<keyword id="KW-0007">Acetylation</keyword>
<keyword id="KW-0349">Heme</keyword>
<keyword id="KW-0408">Iron</keyword>
<keyword id="KW-0479">Metal-binding</keyword>
<keyword id="KW-0561">Oxygen transport</keyword>
<keyword id="KW-0597">Phosphoprotein</keyword>
<keyword id="KW-0813">Transport</keyword>
<evidence type="ECO:0000250" key="1">
    <source>
        <dbReference type="UniProtKB" id="P01942"/>
    </source>
</evidence>
<evidence type="ECO:0000250" key="2">
    <source>
        <dbReference type="UniProtKB" id="P01946"/>
    </source>
</evidence>
<evidence type="ECO:0000250" key="3">
    <source>
        <dbReference type="UniProtKB" id="P69905"/>
    </source>
</evidence>
<evidence type="ECO:0000255" key="4">
    <source>
        <dbReference type="PROSITE-ProRule" id="PRU00238"/>
    </source>
</evidence>
<gene>
    <name type="primary">HBA</name>
</gene>
<sequence length="143" mass="15456">MVLSPADKTNVKAAWDKVGGHAGDYGAEALERMFLSFPTTKTYFPHFSDLSHGSAQVKAHGKKVGDALNNAVGHMDDLPTALSALSDLHAHKLRVDPVNFKLLSHCLLVTLACHHPAEFTPAVHASLDKFLANVSTVLVSKYR</sequence>
<protein>
    <recommendedName>
        <fullName>Hemoglobin subunit alpha</fullName>
    </recommendedName>
    <alternativeName>
        <fullName>Alpha-globin</fullName>
    </alternativeName>
    <alternativeName>
        <fullName>Hemoglobin alpha chain</fullName>
    </alternativeName>
    <component>
        <recommendedName>
            <fullName evidence="2">Hemopressin</fullName>
        </recommendedName>
    </component>
</protein>
<accession>Q862A7</accession>
<dbReference type="EMBL" id="AB104818">
    <property type="protein sequence ID" value="BAC57967.1"/>
    <property type="molecule type" value="mRNA"/>
</dbReference>
<dbReference type="SMR" id="Q862A7"/>
<dbReference type="GO" id="GO:0072562">
    <property type="term" value="C:blood microparticle"/>
    <property type="evidence" value="ECO:0007669"/>
    <property type="project" value="TreeGrafter"/>
</dbReference>
<dbReference type="GO" id="GO:0031838">
    <property type="term" value="C:haptoglobin-hemoglobin complex"/>
    <property type="evidence" value="ECO:0007669"/>
    <property type="project" value="TreeGrafter"/>
</dbReference>
<dbReference type="GO" id="GO:0005833">
    <property type="term" value="C:hemoglobin complex"/>
    <property type="evidence" value="ECO:0007669"/>
    <property type="project" value="InterPro"/>
</dbReference>
<dbReference type="GO" id="GO:0031720">
    <property type="term" value="F:haptoglobin binding"/>
    <property type="evidence" value="ECO:0007669"/>
    <property type="project" value="TreeGrafter"/>
</dbReference>
<dbReference type="GO" id="GO:0020037">
    <property type="term" value="F:heme binding"/>
    <property type="evidence" value="ECO:0007669"/>
    <property type="project" value="InterPro"/>
</dbReference>
<dbReference type="GO" id="GO:0005506">
    <property type="term" value="F:iron ion binding"/>
    <property type="evidence" value="ECO:0007669"/>
    <property type="project" value="InterPro"/>
</dbReference>
<dbReference type="GO" id="GO:0043177">
    <property type="term" value="F:organic acid binding"/>
    <property type="evidence" value="ECO:0007669"/>
    <property type="project" value="TreeGrafter"/>
</dbReference>
<dbReference type="GO" id="GO:0019825">
    <property type="term" value="F:oxygen binding"/>
    <property type="evidence" value="ECO:0007669"/>
    <property type="project" value="InterPro"/>
</dbReference>
<dbReference type="GO" id="GO:0005344">
    <property type="term" value="F:oxygen carrier activity"/>
    <property type="evidence" value="ECO:0007669"/>
    <property type="project" value="UniProtKB-KW"/>
</dbReference>
<dbReference type="GO" id="GO:0004601">
    <property type="term" value="F:peroxidase activity"/>
    <property type="evidence" value="ECO:0007669"/>
    <property type="project" value="TreeGrafter"/>
</dbReference>
<dbReference type="GO" id="GO:0042744">
    <property type="term" value="P:hydrogen peroxide catabolic process"/>
    <property type="evidence" value="ECO:0007669"/>
    <property type="project" value="TreeGrafter"/>
</dbReference>
<dbReference type="CDD" id="cd08927">
    <property type="entry name" value="Hb-alpha-like"/>
    <property type="match status" value="1"/>
</dbReference>
<dbReference type="FunFam" id="1.10.490.10:FF:000002">
    <property type="entry name" value="Hemoglobin subunit alpha"/>
    <property type="match status" value="1"/>
</dbReference>
<dbReference type="Gene3D" id="1.10.490.10">
    <property type="entry name" value="Globins"/>
    <property type="match status" value="1"/>
</dbReference>
<dbReference type="InterPro" id="IPR000971">
    <property type="entry name" value="Globin"/>
</dbReference>
<dbReference type="InterPro" id="IPR009050">
    <property type="entry name" value="Globin-like_sf"/>
</dbReference>
<dbReference type="InterPro" id="IPR012292">
    <property type="entry name" value="Globin/Proto"/>
</dbReference>
<dbReference type="InterPro" id="IPR002338">
    <property type="entry name" value="Hemoglobin_a-typ"/>
</dbReference>
<dbReference type="InterPro" id="IPR050056">
    <property type="entry name" value="Hemoglobin_oxygen_transport"/>
</dbReference>
<dbReference type="InterPro" id="IPR002339">
    <property type="entry name" value="Hemoglobin_pi"/>
</dbReference>
<dbReference type="PANTHER" id="PTHR11442">
    <property type="entry name" value="HEMOGLOBIN FAMILY MEMBER"/>
    <property type="match status" value="1"/>
</dbReference>
<dbReference type="PANTHER" id="PTHR11442:SF48">
    <property type="entry name" value="HEMOGLOBIN SUBUNIT ALPHA"/>
    <property type="match status" value="1"/>
</dbReference>
<dbReference type="Pfam" id="PF00042">
    <property type="entry name" value="Globin"/>
    <property type="match status" value="1"/>
</dbReference>
<dbReference type="PRINTS" id="PR00612">
    <property type="entry name" value="ALPHAHAEM"/>
</dbReference>
<dbReference type="PRINTS" id="PR00815">
    <property type="entry name" value="PIHAEM"/>
</dbReference>
<dbReference type="SUPFAM" id="SSF46458">
    <property type="entry name" value="Globin-like"/>
    <property type="match status" value="1"/>
</dbReference>
<dbReference type="PROSITE" id="PS01033">
    <property type="entry name" value="GLOBIN"/>
    <property type="match status" value="1"/>
</dbReference>